<evidence type="ECO:0000255" key="1">
    <source>
        <dbReference type="HAMAP-Rule" id="MF_01367"/>
    </source>
</evidence>
<evidence type="ECO:0000305" key="2"/>
<gene>
    <name evidence="1" type="primary">rpl14</name>
</gene>
<reference key="1">
    <citation type="journal article" date="2005" name="DNA Res.">
        <title>Complete nucleotide sequence of the chloroplast genome from the Tasmanian blue gum, Eucalyptus globulus (Myrtaceae).</title>
        <authorList>
            <person name="Steane D.A."/>
        </authorList>
    </citation>
    <scope>NUCLEOTIDE SEQUENCE [LARGE SCALE GENOMIC DNA]</scope>
</reference>
<proteinExistence type="inferred from homology"/>
<comment type="function">
    <text evidence="1">Binds to 23S rRNA.</text>
</comment>
<comment type="subunit">
    <text evidence="1">Part of the 50S ribosomal subunit.</text>
</comment>
<comment type="subcellular location">
    <subcellularLocation>
        <location>Plastid</location>
        <location>Chloroplast</location>
    </subcellularLocation>
</comment>
<comment type="similarity">
    <text evidence="1">Belongs to the universal ribosomal protein uL14 family.</text>
</comment>
<feature type="chain" id="PRO_0000276344" description="Large ribosomal subunit protein uL14c">
    <location>
        <begin position="1"/>
        <end position="122"/>
    </location>
</feature>
<protein>
    <recommendedName>
        <fullName evidence="1">Large ribosomal subunit protein uL14c</fullName>
    </recommendedName>
    <alternativeName>
        <fullName evidence="2">50S ribosomal protein L14, chloroplastic</fullName>
    </alternativeName>
</protein>
<sequence length="122" mass="13561">MIQPQSHLNVADNSGARELMCIRIIGASNRRYAHIGDIIVAVIKEALPNTPLERSEVIRAVIVRTCKELKRDNGMIIRYDDNAAVVIDQEGNPKGTRVFGAIARELRQLNFTKIVSLAPEVL</sequence>
<name>RK14_EUCGG</name>
<dbReference type="EMBL" id="AY780259">
    <property type="protein sequence ID" value="AAX21063.1"/>
    <property type="molecule type" value="Genomic_DNA"/>
</dbReference>
<dbReference type="RefSeq" id="YP_636335.1">
    <property type="nucleotide sequence ID" value="NC_008115.1"/>
</dbReference>
<dbReference type="SMR" id="Q49KW2"/>
<dbReference type="GeneID" id="4108485"/>
<dbReference type="GO" id="GO:0009507">
    <property type="term" value="C:chloroplast"/>
    <property type="evidence" value="ECO:0007669"/>
    <property type="project" value="UniProtKB-SubCell"/>
</dbReference>
<dbReference type="GO" id="GO:0022625">
    <property type="term" value="C:cytosolic large ribosomal subunit"/>
    <property type="evidence" value="ECO:0007669"/>
    <property type="project" value="TreeGrafter"/>
</dbReference>
<dbReference type="GO" id="GO:0070180">
    <property type="term" value="F:large ribosomal subunit rRNA binding"/>
    <property type="evidence" value="ECO:0007669"/>
    <property type="project" value="TreeGrafter"/>
</dbReference>
<dbReference type="GO" id="GO:0003735">
    <property type="term" value="F:structural constituent of ribosome"/>
    <property type="evidence" value="ECO:0007669"/>
    <property type="project" value="InterPro"/>
</dbReference>
<dbReference type="GO" id="GO:0006412">
    <property type="term" value="P:translation"/>
    <property type="evidence" value="ECO:0007669"/>
    <property type="project" value="UniProtKB-UniRule"/>
</dbReference>
<dbReference type="CDD" id="cd00337">
    <property type="entry name" value="Ribosomal_uL14"/>
    <property type="match status" value="1"/>
</dbReference>
<dbReference type="FunFam" id="2.40.150.20:FF:000002">
    <property type="entry name" value="50S ribosomal protein L14, chloroplastic"/>
    <property type="match status" value="1"/>
</dbReference>
<dbReference type="Gene3D" id="2.40.150.20">
    <property type="entry name" value="Ribosomal protein L14"/>
    <property type="match status" value="1"/>
</dbReference>
<dbReference type="HAMAP" id="MF_01367">
    <property type="entry name" value="Ribosomal_uL14"/>
    <property type="match status" value="1"/>
</dbReference>
<dbReference type="InterPro" id="IPR000218">
    <property type="entry name" value="Ribosomal_uL14"/>
</dbReference>
<dbReference type="InterPro" id="IPR005745">
    <property type="entry name" value="Ribosomal_uL14_bac-type"/>
</dbReference>
<dbReference type="InterPro" id="IPR019972">
    <property type="entry name" value="Ribosomal_uL14_CS"/>
</dbReference>
<dbReference type="InterPro" id="IPR036853">
    <property type="entry name" value="Ribosomal_uL14_sf"/>
</dbReference>
<dbReference type="NCBIfam" id="TIGR01067">
    <property type="entry name" value="rplN_bact"/>
    <property type="match status" value="1"/>
</dbReference>
<dbReference type="PANTHER" id="PTHR11761">
    <property type="entry name" value="50S/60S RIBOSOMAL PROTEIN L14/L23"/>
    <property type="match status" value="1"/>
</dbReference>
<dbReference type="PANTHER" id="PTHR11761:SF3">
    <property type="entry name" value="LARGE RIBOSOMAL SUBUNIT PROTEIN UL14M"/>
    <property type="match status" value="1"/>
</dbReference>
<dbReference type="Pfam" id="PF00238">
    <property type="entry name" value="Ribosomal_L14"/>
    <property type="match status" value="1"/>
</dbReference>
<dbReference type="SMART" id="SM01374">
    <property type="entry name" value="Ribosomal_L14"/>
    <property type="match status" value="1"/>
</dbReference>
<dbReference type="SUPFAM" id="SSF50193">
    <property type="entry name" value="Ribosomal protein L14"/>
    <property type="match status" value="1"/>
</dbReference>
<dbReference type="PROSITE" id="PS00049">
    <property type="entry name" value="RIBOSOMAL_L14"/>
    <property type="match status" value="1"/>
</dbReference>
<geneLocation type="chloroplast"/>
<organism>
    <name type="scientific">Eucalyptus globulus subsp. globulus</name>
    <name type="common">Tasmanian blue gum</name>
    <dbReference type="NCBI Taxonomy" id="71271"/>
    <lineage>
        <taxon>Eukaryota</taxon>
        <taxon>Viridiplantae</taxon>
        <taxon>Streptophyta</taxon>
        <taxon>Embryophyta</taxon>
        <taxon>Tracheophyta</taxon>
        <taxon>Spermatophyta</taxon>
        <taxon>Magnoliopsida</taxon>
        <taxon>eudicotyledons</taxon>
        <taxon>Gunneridae</taxon>
        <taxon>Pentapetalae</taxon>
        <taxon>rosids</taxon>
        <taxon>malvids</taxon>
        <taxon>Myrtales</taxon>
        <taxon>Myrtaceae</taxon>
        <taxon>Myrtoideae</taxon>
        <taxon>Eucalypteae</taxon>
        <taxon>Eucalyptus</taxon>
    </lineage>
</organism>
<accession>Q49KW2</accession>
<keyword id="KW-0150">Chloroplast</keyword>
<keyword id="KW-0934">Plastid</keyword>
<keyword id="KW-0687">Ribonucleoprotein</keyword>
<keyword id="KW-0689">Ribosomal protein</keyword>
<keyword id="KW-0694">RNA-binding</keyword>
<keyword id="KW-0699">rRNA-binding</keyword>